<sequence>MKSHKMMGGGISMHYITACLKIISDKDLNEIMKEFKKLEEETNKEEGCITFHAYPLEPSERKIMLWEIWENEEAVKIHFTKKHTIDVQKQELTEVEWLMKSNVND</sequence>
<evidence type="ECO:0007829" key="1">
    <source>
        <dbReference type="PDB" id="1Q8B"/>
    </source>
</evidence>
<name>YJCS_BACSU</name>
<keyword id="KW-0002">3D-structure</keyword>
<keyword id="KW-1185">Reference proteome</keyword>
<gene>
    <name type="primary">yjcS</name>
    <name type="ordered locus">BSU11970</name>
</gene>
<feature type="chain" id="PRO_0000369120" description="Uncharacterized protein YjcS">
    <location>
        <begin position="1"/>
        <end position="105"/>
    </location>
</feature>
<feature type="domain" description="ABM">
    <location>
        <begin position="14"/>
        <end position="104"/>
    </location>
</feature>
<feature type="strand" evidence="1">
    <location>
        <begin position="13"/>
        <end position="22"/>
    </location>
</feature>
<feature type="helix" evidence="1">
    <location>
        <begin position="28"/>
        <end position="42"/>
    </location>
</feature>
<feature type="strand" evidence="1">
    <location>
        <begin position="48"/>
        <end position="55"/>
    </location>
</feature>
<feature type="helix" evidence="1">
    <location>
        <begin position="58"/>
        <end position="60"/>
    </location>
</feature>
<feature type="strand" evidence="1">
    <location>
        <begin position="62"/>
        <end position="71"/>
    </location>
</feature>
<feature type="helix" evidence="1">
    <location>
        <begin position="72"/>
        <end position="78"/>
    </location>
</feature>
<feature type="helix" evidence="1">
    <location>
        <begin position="82"/>
        <end position="88"/>
    </location>
</feature>
<feature type="turn" evidence="1">
    <location>
        <begin position="89"/>
        <end position="91"/>
    </location>
</feature>
<feature type="strand" evidence="1">
    <location>
        <begin position="93"/>
        <end position="103"/>
    </location>
</feature>
<reference key="1">
    <citation type="journal article" date="1997" name="Nature">
        <title>The complete genome sequence of the Gram-positive bacterium Bacillus subtilis.</title>
        <authorList>
            <person name="Kunst F."/>
            <person name="Ogasawara N."/>
            <person name="Moszer I."/>
            <person name="Albertini A.M."/>
            <person name="Alloni G."/>
            <person name="Azevedo V."/>
            <person name="Bertero M.G."/>
            <person name="Bessieres P."/>
            <person name="Bolotin A."/>
            <person name="Borchert S."/>
            <person name="Borriss R."/>
            <person name="Boursier L."/>
            <person name="Brans A."/>
            <person name="Braun M."/>
            <person name="Brignell S.C."/>
            <person name="Bron S."/>
            <person name="Brouillet S."/>
            <person name="Bruschi C.V."/>
            <person name="Caldwell B."/>
            <person name="Capuano V."/>
            <person name="Carter N.M."/>
            <person name="Choi S.-K."/>
            <person name="Codani J.-J."/>
            <person name="Connerton I.F."/>
            <person name="Cummings N.J."/>
            <person name="Daniel R.A."/>
            <person name="Denizot F."/>
            <person name="Devine K.M."/>
            <person name="Duesterhoeft A."/>
            <person name="Ehrlich S.D."/>
            <person name="Emmerson P.T."/>
            <person name="Entian K.-D."/>
            <person name="Errington J."/>
            <person name="Fabret C."/>
            <person name="Ferrari E."/>
            <person name="Foulger D."/>
            <person name="Fritz C."/>
            <person name="Fujita M."/>
            <person name="Fujita Y."/>
            <person name="Fuma S."/>
            <person name="Galizzi A."/>
            <person name="Galleron N."/>
            <person name="Ghim S.-Y."/>
            <person name="Glaser P."/>
            <person name="Goffeau A."/>
            <person name="Golightly E.J."/>
            <person name="Grandi G."/>
            <person name="Guiseppi G."/>
            <person name="Guy B.J."/>
            <person name="Haga K."/>
            <person name="Haiech J."/>
            <person name="Harwood C.R."/>
            <person name="Henaut A."/>
            <person name="Hilbert H."/>
            <person name="Holsappel S."/>
            <person name="Hosono S."/>
            <person name="Hullo M.-F."/>
            <person name="Itaya M."/>
            <person name="Jones L.-M."/>
            <person name="Joris B."/>
            <person name="Karamata D."/>
            <person name="Kasahara Y."/>
            <person name="Klaerr-Blanchard M."/>
            <person name="Klein C."/>
            <person name="Kobayashi Y."/>
            <person name="Koetter P."/>
            <person name="Koningstein G."/>
            <person name="Krogh S."/>
            <person name="Kumano M."/>
            <person name="Kurita K."/>
            <person name="Lapidus A."/>
            <person name="Lardinois S."/>
            <person name="Lauber J."/>
            <person name="Lazarevic V."/>
            <person name="Lee S.-M."/>
            <person name="Levine A."/>
            <person name="Liu H."/>
            <person name="Masuda S."/>
            <person name="Mauel C."/>
            <person name="Medigue C."/>
            <person name="Medina N."/>
            <person name="Mellado R.P."/>
            <person name="Mizuno M."/>
            <person name="Moestl D."/>
            <person name="Nakai S."/>
            <person name="Noback M."/>
            <person name="Noone D."/>
            <person name="O'Reilly M."/>
            <person name="Ogawa K."/>
            <person name="Ogiwara A."/>
            <person name="Oudega B."/>
            <person name="Park S.-H."/>
            <person name="Parro V."/>
            <person name="Pohl T.M."/>
            <person name="Portetelle D."/>
            <person name="Porwollik S."/>
            <person name="Prescott A.M."/>
            <person name="Presecan E."/>
            <person name="Pujic P."/>
            <person name="Purnelle B."/>
            <person name="Rapoport G."/>
            <person name="Rey M."/>
            <person name="Reynolds S."/>
            <person name="Rieger M."/>
            <person name="Rivolta C."/>
            <person name="Rocha E."/>
            <person name="Roche B."/>
            <person name="Rose M."/>
            <person name="Sadaie Y."/>
            <person name="Sato T."/>
            <person name="Scanlan E."/>
            <person name="Schleich S."/>
            <person name="Schroeter R."/>
            <person name="Scoffone F."/>
            <person name="Sekiguchi J."/>
            <person name="Sekowska A."/>
            <person name="Seror S.J."/>
            <person name="Serror P."/>
            <person name="Shin B.-S."/>
            <person name="Soldo B."/>
            <person name="Sorokin A."/>
            <person name="Tacconi E."/>
            <person name="Takagi T."/>
            <person name="Takahashi H."/>
            <person name="Takemaru K."/>
            <person name="Takeuchi M."/>
            <person name="Tamakoshi A."/>
            <person name="Tanaka T."/>
            <person name="Terpstra P."/>
            <person name="Tognoni A."/>
            <person name="Tosato V."/>
            <person name="Uchiyama S."/>
            <person name="Vandenbol M."/>
            <person name="Vannier F."/>
            <person name="Vassarotti A."/>
            <person name="Viari A."/>
            <person name="Wambutt R."/>
            <person name="Wedler E."/>
            <person name="Wedler H."/>
            <person name="Weitzenegger T."/>
            <person name="Winters P."/>
            <person name="Wipat A."/>
            <person name="Yamamoto H."/>
            <person name="Yamane K."/>
            <person name="Yasumoto K."/>
            <person name="Yata K."/>
            <person name="Yoshida K."/>
            <person name="Yoshikawa H.-F."/>
            <person name="Zumstein E."/>
            <person name="Yoshikawa H."/>
            <person name="Danchin A."/>
        </authorList>
    </citation>
    <scope>NUCLEOTIDE SEQUENCE [LARGE SCALE GENOMIC DNA]</scope>
    <source>
        <strain>168</strain>
    </source>
</reference>
<accession>O31641</accession>
<dbReference type="EMBL" id="AL009126">
    <property type="protein sequence ID" value="CAB13054.1"/>
    <property type="molecule type" value="Genomic_DNA"/>
</dbReference>
<dbReference type="PIR" id="C69848">
    <property type="entry name" value="C69848"/>
</dbReference>
<dbReference type="RefSeq" id="NP_389079.1">
    <property type="nucleotide sequence ID" value="NC_000964.3"/>
</dbReference>
<dbReference type="RefSeq" id="WP_010886486.1">
    <property type="nucleotide sequence ID" value="NZ_OZ025638.1"/>
</dbReference>
<dbReference type="PDB" id="1Q8B">
    <property type="method" value="X-ray"/>
    <property type="resolution" value="1.90 A"/>
    <property type="chains" value="A=1-105"/>
</dbReference>
<dbReference type="PDBsum" id="1Q8B"/>
<dbReference type="SMR" id="O31641"/>
<dbReference type="FunCoup" id="O31641">
    <property type="interactions" value="3"/>
</dbReference>
<dbReference type="STRING" id="224308.BSU11970"/>
<dbReference type="PaxDb" id="224308-BSU11970"/>
<dbReference type="EnsemblBacteria" id="CAB13054">
    <property type="protein sequence ID" value="CAB13054"/>
    <property type="gene ID" value="BSU_11970"/>
</dbReference>
<dbReference type="GeneID" id="939400"/>
<dbReference type="KEGG" id="bsu:BSU11970"/>
<dbReference type="PATRIC" id="fig|224308.43.peg.1254"/>
<dbReference type="eggNOG" id="COG1359">
    <property type="taxonomic scope" value="Bacteria"/>
</dbReference>
<dbReference type="InParanoid" id="O31641"/>
<dbReference type="OrthoDB" id="2364540at2"/>
<dbReference type="BioCyc" id="BSUB:BSU11970-MONOMER"/>
<dbReference type="EvolutionaryTrace" id="O31641"/>
<dbReference type="Proteomes" id="UP000001570">
    <property type="component" value="Chromosome"/>
</dbReference>
<dbReference type="GO" id="GO:0003824">
    <property type="term" value="F:catalytic activity"/>
    <property type="evidence" value="ECO:0000318"/>
    <property type="project" value="GO_Central"/>
</dbReference>
<dbReference type="Gene3D" id="3.30.70.100">
    <property type="match status" value="1"/>
</dbReference>
<dbReference type="InterPro" id="IPR007138">
    <property type="entry name" value="ABM_dom"/>
</dbReference>
<dbReference type="InterPro" id="IPR050744">
    <property type="entry name" value="AI-2_Isomerase_LsrG"/>
</dbReference>
<dbReference type="InterPro" id="IPR011008">
    <property type="entry name" value="Dimeric_a/b-barrel"/>
</dbReference>
<dbReference type="PANTHER" id="PTHR33336:SF3">
    <property type="entry name" value="ABM DOMAIN-CONTAINING PROTEIN"/>
    <property type="match status" value="1"/>
</dbReference>
<dbReference type="PANTHER" id="PTHR33336">
    <property type="entry name" value="QUINOL MONOOXYGENASE YGIN-RELATED"/>
    <property type="match status" value="1"/>
</dbReference>
<dbReference type="Pfam" id="PF03992">
    <property type="entry name" value="ABM"/>
    <property type="match status" value="1"/>
</dbReference>
<dbReference type="SUPFAM" id="SSF54909">
    <property type="entry name" value="Dimeric alpha+beta barrel"/>
    <property type="match status" value="1"/>
</dbReference>
<dbReference type="PROSITE" id="PS51725">
    <property type="entry name" value="ABM"/>
    <property type="match status" value="1"/>
</dbReference>
<protein>
    <recommendedName>
        <fullName>Uncharacterized protein YjcS</fullName>
    </recommendedName>
</protein>
<proteinExistence type="evidence at protein level"/>
<organism>
    <name type="scientific">Bacillus subtilis (strain 168)</name>
    <dbReference type="NCBI Taxonomy" id="224308"/>
    <lineage>
        <taxon>Bacteria</taxon>
        <taxon>Bacillati</taxon>
        <taxon>Bacillota</taxon>
        <taxon>Bacilli</taxon>
        <taxon>Bacillales</taxon>
        <taxon>Bacillaceae</taxon>
        <taxon>Bacillus</taxon>
    </lineage>
</organism>